<dbReference type="EMBL" id="AE004969">
    <property type="protein sequence ID" value="AAW88804.1"/>
    <property type="molecule type" value="Genomic_DNA"/>
</dbReference>
<dbReference type="RefSeq" id="WP_003687253.1">
    <property type="nucleotide sequence ID" value="NC_002946.2"/>
</dbReference>
<dbReference type="RefSeq" id="YP_207216.1">
    <property type="nucleotide sequence ID" value="NC_002946.2"/>
</dbReference>
<dbReference type="SMR" id="Q5FAI3"/>
<dbReference type="STRING" id="242231.NGO_0035"/>
<dbReference type="GeneID" id="66752298"/>
<dbReference type="KEGG" id="ngo:NGO_0035"/>
<dbReference type="PATRIC" id="fig|242231.10.peg.35"/>
<dbReference type="HOGENOM" id="CLU_027562_9_0_4"/>
<dbReference type="Proteomes" id="UP000000535">
    <property type="component" value="Chromosome"/>
</dbReference>
<dbReference type="GO" id="GO:0005737">
    <property type="term" value="C:cytoplasm"/>
    <property type="evidence" value="ECO:0007669"/>
    <property type="project" value="UniProtKB-SubCell"/>
</dbReference>
<dbReference type="GO" id="GO:0003677">
    <property type="term" value="F:DNA binding"/>
    <property type="evidence" value="ECO:0007669"/>
    <property type="project" value="UniProtKB-KW"/>
</dbReference>
<dbReference type="GO" id="GO:0009037">
    <property type="term" value="F:tyrosine-based site-specific recombinase activity"/>
    <property type="evidence" value="ECO:0007669"/>
    <property type="project" value="UniProtKB-UniRule"/>
</dbReference>
<dbReference type="GO" id="GO:0051301">
    <property type="term" value="P:cell division"/>
    <property type="evidence" value="ECO:0007669"/>
    <property type="project" value="UniProtKB-KW"/>
</dbReference>
<dbReference type="GO" id="GO:0007059">
    <property type="term" value="P:chromosome segregation"/>
    <property type="evidence" value="ECO:0007669"/>
    <property type="project" value="UniProtKB-UniRule"/>
</dbReference>
<dbReference type="GO" id="GO:0006313">
    <property type="term" value="P:DNA transposition"/>
    <property type="evidence" value="ECO:0007669"/>
    <property type="project" value="UniProtKB-UniRule"/>
</dbReference>
<dbReference type="CDD" id="cd00798">
    <property type="entry name" value="INT_XerDC_C"/>
    <property type="match status" value="1"/>
</dbReference>
<dbReference type="Gene3D" id="1.10.150.130">
    <property type="match status" value="1"/>
</dbReference>
<dbReference type="Gene3D" id="1.10.443.10">
    <property type="entry name" value="Intergrase catalytic core"/>
    <property type="match status" value="1"/>
</dbReference>
<dbReference type="HAMAP" id="MF_01808">
    <property type="entry name" value="Recomb_XerC_XerD"/>
    <property type="match status" value="1"/>
</dbReference>
<dbReference type="InterPro" id="IPR044068">
    <property type="entry name" value="CB"/>
</dbReference>
<dbReference type="InterPro" id="IPR011010">
    <property type="entry name" value="DNA_brk_join_enz"/>
</dbReference>
<dbReference type="InterPro" id="IPR013762">
    <property type="entry name" value="Integrase-like_cat_sf"/>
</dbReference>
<dbReference type="InterPro" id="IPR002104">
    <property type="entry name" value="Integrase_catalytic"/>
</dbReference>
<dbReference type="InterPro" id="IPR010998">
    <property type="entry name" value="Integrase_recombinase_N"/>
</dbReference>
<dbReference type="InterPro" id="IPR004107">
    <property type="entry name" value="Integrase_SAM-like_N"/>
</dbReference>
<dbReference type="InterPro" id="IPR011931">
    <property type="entry name" value="Recomb_XerC"/>
</dbReference>
<dbReference type="InterPro" id="IPR023009">
    <property type="entry name" value="Tyrosine_recombinase_XerC/XerD"/>
</dbReference>
<dbReference type="InterPro" id="IPR050090">
    <property type="entry name" value="Tyrosine_recombinase_XerCD"/>
</dbReference>
<dbReference type="NCBIfam" id="TIGR02224">
    <property type="entry name" value="recomb_XerC"/>
    <property type="match status" value="1"/>
</dbReference>
<dbReference type="PANTHER" id="PTHR30349">
    <property type="entry name" value="PHAGE INTEGRASE-RELATED"/>
    <property type="match status" value="1"/>
</dbReference>
<dbReference type="PANTHER" id="PTHR30349:SF81">
    <property type="entry name" value="TYROSINE RECOMBINASE XERC"/>
    <property type="match status" value="1"/>
</dbReference>
<dbReference type="Pfam" id="PF02899">
    <property type="entry name" value="Phage_int_SAM_1"/>
    <property type="match status" value="1"/>
</dbReference>
<dbReference type="Pfam" id="PF00589">
    <property type="entry name" value="Phage_integrase"/>
    <property type="match status" value="1"/>
</dbReference>
<dbReference type="SUPFAM" id="SSF56349">
    <property type="entry name" value="DNA breaking-rejoining enzymes"/>
    <property type="match status" value="1"/>
</dbReference>
<dbReference type="PROSITE" id="PS51900">
    <property type="entry name" value="CB"/>
    <property type="match status" value="1"/>
</dbReference>
<dbReference type="PROSITE" id="PS51898">
    <property type="entry name" value="TYR_RECOMBINASE"/>
    <property type="match status" value="1"/>
</dbReference>
<name>XERC_NEIG1</name>
<comment type="function">
    <text evidence="1">Site-specific tyrosine recombinase, which acts by catalyzing the cutting and rejoining of the recombining DNA molecules. The XerC-XerD complex is essential to convert dimers of the bacterial chromosome into monomers to permit their segregation at cell division. It also contributes to the segregational stability of plasmids.</text>
</comment>
<comment type="subunit">
    <text evidence="1">Forms a cyclic heterotetrameric complex composed of two molecules of XerC and two molecules of XerD.</text>
</comment>
<comment type="subcellular location">
    <subcellularLocation>
        <location evidence="1">Cytoplasm</location>
    </subcellularLocation>
</comment>
<comment type="similarity">
    <text evidence="1">Belongs to the 'phage' integrase family. XerC subfamily.</text>
</comment>
<gene>
    <name evidence="1" type="primary">xerC</name>
    <name type="ordered locus">NGO_0035</name>
</gene>
<reference key="1">
    <citation type="submission" date="2003-03" db="EMBL/GenBank/DDBJ databases">
        <title>The complete genome sequence of Neisseria gonorrhoeae.</title>
        <authorList>
            <person name="Lewis L.A."/>
            <person name="Gillaspy A.F."/>
            <person name="McLaughlin R.E."/>
            <person name="Gipson M."/>
            <person name="Ducey T.F."/>
            <person name="Ownbey T."/>
            <person name="Hartman K."/>
            <person name="Nydick C."/>
            <person name="Carson M.B."/>
            <person name="Vaughn J."/>
            <person name="Thomson C."/>
            <person name="Song L."/>
            <person name="Lin S."/>
            <person name="Yuan X."/>
            <person name="Najar F."/>
            <person name="Zhan M."/>
            <person name="Ren Q."/>
            <person name="Zhu H."/>
            <person name="Qi S."/>
            <person name="Kenton S.M."/>
            <person name="Lai H."/>
            <person name="White J.D."/>
            <person name="Clifton S."/>
            <person name="Roe B.A."/>
            <person name="Dyer D.W."/>
        </authorList>
    </citation>
    <scope>NUCLEOTIDE SEQUENCE [LARGE SCALE GENOMIC DNA]</scope>
    <source>
        <strain>ATCC 700825 / FA 1090</strain>
    </source>
</reference>
<feature type="chain" id="PRO_1000070019" description="Tyrosine recombinase XerC">
    <location>
        <begin position="1"/>
        <end position="305"/>
    </location>
</feature>
<feature type="domain" description="Core-binding (CB)" evidence="3">
    <location>
        <begin position="1"/>
        <end position="93"/>
    </location>
</feature>
<feature type="domain" description="Tyr recombinase" evidence="2">
    <location>
        <begin position="114"/>
        <end position="294"/>
    </location>
</feature>
<feature type="active site" evidence="1">
    <location>
        <position position="155"/>
    </location>
</feature>
<feature type="active site" evidence="1">
    <location>
        <position position="179"/>
    </location>
</feature>
<feature type="active site" evidence="1">
    <location>
        <position position="246"/>
    </location>
</feature>
<feature type="active site" evidence="1">
    <location>
        <position position="249"/>
    </location>
</feature>
<feature type="active site" evidence="1">
    <location>
        <position position="272"/>
    </location>
</feature>
<feature type="active site" description="O-(3'-phospho-DNA)-tyrosine intermediate" evidence="1">
    <location>
        <position position="281"/>
    </location>
</feature>
<proteinExistence type="inferred from homology"/>
<accession>Q5FAI3</accession>
<organism>
    <name type="scientific">Neisseria gonorrhoeae (strain ATCC 700825 / FA 1090)</name>
    <dbReference type="NCBI Taxonomy" id="242231"/>
    <lineage>
        <taxon>Bacteria</taxon>
        <taxon>Pseudomonadati</taxon>
        <taxon>Pseudomonadota</taxon>
        <taxon>Betaproteobacteria</taxon>
        <taxon>Neisseriales</taxon>
        <taxon>Neisseriaceae</taxon>
        <taxon>Neisseria</taxon>
    </lineage>
</organism>
<protein>
    <recommendedName>
        <fullName evidence="1">Tyrosine recombinase XerC</fullName>
    </recommendedName>
</protein>
<sequence>MVLDGFAAYFDAYLENIVREGKSEHTVAAYRRDLEELFALLAQMPSEDAGGVPQDLSRRDFTAALRRLSQRGLDGRTLARKLSAWRQYCAWLVKRGLMRADPTADIKPPKQPERVPKALPQEWLNRMLDLPVDGGDPLAVRDHALFELMYGSGLRVSEIHGLNADDVYLDEAWVHVTGKGRKQRQVPLTGKSVEALKNYLPLRQTASDGKALFTGRNGTRLSQRQIQKRLESWAAQYGDGRHVSPHMMRHSYAGHLLQASRDIRAVQELLGHSSLSTTQIYTKLDFDHIARLYDEAHPRAKRQDE</sequence>
<evidence type="ECO:0000255" key="1">
    <source>
        <dbReference type="HAMAP-Rule" id="MF_01808"/>
    </source>
</evidence>
<evidence type="ECO:0000255" key="2">
    <source>
        <dbReference type="PROSITE-ProRule" id="PRU01246"/>
    </source>
</evidence>
<evidence type="ECO:0000255" key="3">
    <source>
        <dbReference type="PROSITE-ProRule" id="PRU01248"/>
    </source>
</evidence>
<keyword id="KW-0131">Cell cycle</keyword>
<keyword id="KW-0132">Cell division</keyword>
<keyword id="KW-0159">Chromosome partition</keyword>
<keyword id="KW-0963">Cytoplasm</keyword>
<keyword id="KW-0229">DNA integration</keyword>
<keyword id="KW-0233">DNA recombination</keyword>
<keyword id="KW-0238">DNA-binding</keyword>
<keyword id="KW-1185">Reference proteome</keyword>